<name>PANB_DEHMB</name>
<organism>
    <name type="scientific">Dehalococcoides mccartyi (strain ATCC BAA-2100 / JCM 16839 / KCTC 5957 / BAV1)</name>
    <dbReference type="NCBI Taxonomy" id="216389"/>
    <lineage>
        <taxon>Bacteria</taxon>
        <taxon>Bacillati</taxon>
        <taxon>Chloroflexota</taxon>
        <taxon>Dehalococcoidia</taxon>
        <taxon>Dehalococcoidales</taxon>
        <taxon>Dehalococcoidaceae</taxon>
        <taxon>Dehalococcoides</taxon>
    </lineage>
</organism>
<sequence>MRTTISQLKEMKQNKQKIAILTAYDYPTAQILDKAGIPAILVGDSLGMVVLGYDSTVSVTMEDMLHHLKAVVRGSQKALIIADMPFMTYHLSPEQALLNAGRFIQEGGAQAVKLEGGVNVADKVKRIVDCGIPVMGHIGLTPQSVNQLSGFKVQGKTLATALSLIEDAKALEKAGAFAIVLETMPAELAAIITAGISIPTIGIGAGEECDGQVQVISDMLGMFTDFIPKHTKRYADLNGIITKAVSEYAAEVTKGAFPTLKESFTLDKKVLEELKKCVL</sequence>
<gene>
    <name evidence="1" type="primary">panB</name>
    <name type="ordered locus">DehaBAV1_0727</name>
</gene>
<feature type="chain" id="PRO_1000076824" description="3-methyl-2-oxobutanoate hydroxymethyltransferase">
    <location>
        <begin position="1"/>
        <end position="279"/>
    </location>
</feature>
<feature type="active site" description="Proton acceptor" evidence="1">
    <location>
        <position position="182"/>
    </location>
</feature>
<feature type="binding site" evidence="1">
    <location>
        <begin position="44"/>
        <end position="45"/>
    </location>
    <ligand>
        <name>3-methyl-2-oxobutanoate</name>
        <dbReference type="ChEBI" id="CHEBI:11851"/>
    </ligand>
</feature>
<feature type="binding site" evidence="1">
    <location>
        <position position="44"/>
    </location>
    <ligand>
        <name>Mg(2+)</name>
        <dbReference type="ChEBI" id="CHEBI:18420"/>
    </ligand>
</feature>
<feature type="binding site" evidence="1">
    <location>
        <position position="83"/>
    </location>
    <ligand>
        <name>3-methyl-2-oxobutanoate</name>
        <dbReference type="ChEBI" id="CHEBI:11851"/>
    </ligand>
</feature>
<feature type="binding site" evidence="1">
    <location>
        <position position="83"/>
    </location>
    <ligand>
        <name>Mg(2+)</name>
        <dbReference type="ChEBI" id="CHEBI:18420"/>
    </ligand>
</feature>
<feature type="binding site" evidence="1">
    <location>
        <position position="113"/>
    </location>
    <ligand>
        <name>3-methyl-2-oxobutanoate</name>
        <dbReference type="ChEBI" id="CHEBI:11851"/>
    </ligand>
</feature>
<feature type="binding site" evidence="1">
    <location>
        <position position="115"/>
    </location>
    <ligand>
        <name>Mg(2+)</name>
        <dbReference type="ChEBI" id="CHEBI:18420"/>
    </ligand>
</feature>
<reference key="1">
    <citation type="submission" date="2007-05" db="EMBL/GenBank/DDBJ databases">
        <title>Complete sequence of Dehalococcoides sp. BAV1.</title>
        <authorList>
            <consortium name="US DOE Joint Genome Institute"/>
            <person name="Copeland A."/>
            <person name="Lucas S."/>
            <person name="Lapidus A."/>
            <person name="Barry K."/>
            <person name="Detter J.C."/>
            <person name="Glavina del Rio T."/>
            <person name="Hammon N."/>
            <person name="Israni S."/>
            <person name="Pitluck S."/>
            <person name="Lowry S."/>
            <person name="Clum A."/>
            <person name="Schmutz J."/>
            <person name="Larimer F."/>
            <person name="Land M."/>
            <person name="Hauser L."/>
            <person name="Kyrpides N."/>
            <person name="Kim E."/>
            <person name="Ritalahti K.M."/>
            <person name="Loeffler F."/>
            <person name="Richardson P."/>
        </authorList>
    </citation>
    <scope>NUCLEOTIDE SEQUENCE [LARGE SCALE GENOMIC DNA]</scope>
    <source>
        <strain>ATCC BAA-2100 / JCM 16839 / KCTC 5957 / BAV1</strain>
    </source>
</reference>
<proteinExistence type="inferred from homology"/>
<protein>
    <recommendedName>
        <fullName evidence="1">3-methyl-2-oxobutanoate hydroxymethyltransferase</fullName>
        <ecNumber evidence="1">2.1.2.11</ecNumber>
    </recommendedName>
    <alternativeName>
        <fullName evidence="1">Ketopantoate hydroxymethyltransferase</fullName>
        <shortName evidence="1">KPHMT</shortName>
    </alternativeName>
</protein>
<evidence type="ECO:0000255" key="1">
    <source>
        <dbReference type="HAMAP-Rule" id="MF_00156"/>
    </source>
</evidence>
<accession>A5FR68</accession>
<dbReference type="EC" id="2.1.2.11" evidence="1"/>
<dbReference type="EMBL" id="CP000688">
    <property type="protein sequence ID" value="ABQ17311.1"/>
    <property type="molecule type" value="Genomic_DNA"/>
</dbReference>
<dbReference type="SMR" id="A5FR68"/>
<dbReference type="KEGG" id="deb:DehaBAV1_0727"/>
<dbReference type="PATRIC" id="fig|216389.18.peg.776"/>
<dbReference type="HOGENOM" id="CLU_036645_1_0_0"/>
<dbReference type="UniPathway" id="UPA00028">
    <property type="reaction ID" value="UER00003"/>
</dbReference>
<dbReference type="GO" id="GO:0005737">
    <property type="term" value="C:cytoplasm"/>
    <property type="evidence" value="ECO:0007669"/>
    <property type="project" value="UniProtKB-SubCell"/>
</dbReference>
<dbReference type="GO" id="GO:0003864">
    <property type="term" value="F:3-methyl-2-oxobutanoate hydroxymethyltransferase activity"/>
    <property type="evidence" value="ECO:0007669"/>
    <property type="project" value="UniProtKB-UniRule"/>
</dbReference>
<dbReference type="GO" id="GO:0000287">
    <property type="term" value="F:magnesium ion binding"/>
    <property type="evidence" value="ECO:0007669"/>
    <property type="project" value="TreeGrafter"/>
</dbReference>
<dbReference type="GO" id="GO:0015940">
    <property type="term" value="P:pantothenate biosynthetic process"/>
    <property type="evidence" value="ECO:0007669"/>
    <property type="project" value="UniProtKB-UniRule"/>
</dbReference>
<dbReference type="CDD" id="cd06557">
    <property type="entry name" value="KPHMT-like"/>
    <property type="match status" value="1"/>
</dbReference>
<dbReference type="FunFam" id="3.20.20.60:FF:000003">
    <property type="entry name" value="3-methyl-2-oxobutanoate hydroxymethyltransferase"/>
    <property type="match status" value="1"/>
</dbReference>
<dbReference type="Gene3D" id="3.20.20.60">
    <property type="entry name" value="Phosphoenolpyruvate-binding domains"/>
    <property type="match status" value="1"/>
</dbReference>
<dbReference type="HAMAP" id="MF_00156">
    <property type="entry name" value="PanB"/>
    <property type="match status" value="1"/>
</dbReference>
<dbReference type="InterPro" id="IPR003700">
    <property type="entry name" value="Pantoate_hydroxy_MeTrfase"/>
</dbReference>
<dbReference type="InterPro" id="IPR015813">
    <property type="entry name" value="Pyrv/PenolPyrv_kinase-like_dom"/>
</dbReference>
<dbReference type="InterPro" id="IPR040442">
    <property type="entry name" value="Pyrv_kinase-like_dom_sf"/>
</dbReference>
<dbReference type="NCBIfam" id="TIGR00222">
    <property type="entry name" value="panB"/>
    <property type="match status" value="1"/>
</dbReference>
<dbReference type="NCBIfam" id="NF001452">
    <property type="entry name" value="PRK00311.1"/>
    <property type="match status" value="1"/>
</dbReference>
<dbReference type="PANTHER" id="PTHR20881">
    <property type="entry name" value="3-METHYL-2-OXOBUTANOATE HYDROXYMETHYLTRANSFERASE"/>
    <property type="match status" value="1"/>
</dbReference>
<dbReference type="PANTHER" id="PTHR20881:SF0">
    <property type="entry name" value="3-METHYL-2-OXOBUTANOATE HYDROXYMETHYLTRANSFERASE"/>
    <property type="match status" value="1"/>
</dbReference>
<dbReference type="Pfam" id="PF02548">
    <property type="entry name" value="Pantoate_transf"/>
    <property type="match status" value="1"/>
</dbReference>
<dbReference type="PIRSF" id="PIRSF000388">
    <property type="entry name" value="Pantoate_hydroxy_MeTrfase"/>
    <property type="match status" value="1"/>
</dbReference>
<dbReference type="SUPFAM" id="SSF51621">
    <property type="entry name" value="Phosphoenolpyruvate/pyruvate domain"/>
    <property type="match status" value="1"/>
</dbReference>
<comment type="function">
    <text evidence="1">Catalyzes the reversible reaction in which hydroxymethyl group from 5,10-methylenetetrahydrofolate is transferred onto alpha-ketoisovalerate to form ketopantoate.</text>
</comment>
<comment type="catalytic activity">
    <reaction evidence="1">
        <text>3-methyl-2-oxobutanoate + (6R)-5,10-methylene-5,6,7,8-tetrahydrofolate + H2O = 2-dehydropantoate + (6S)-5,6,7,8-tetrahydrofolate</text>
        <dbReference type="Rhea" id="RHEA:11824"/>
        <dbReference type="ChEBI" id="CHEBI:11561"/>
        <dbReference type="ChEBI" id="CHEBI:11851"/>
        <dbReference type="ChEBI" id="CHEBI:15377"/>
        <dbReference type="ChEBI" id="CHEBI:15636"/>
        <dbReference type="ChEBI" id="CHEBI:57453"/>
        <dbReference type="EC" id="2.1.2.11"/>
    </reaction>
</comment>
<comment type="cofactor">
    <cofactor evidence="1">
        <name>Mg(2+)</name>
        <dbReference type="ChEBI" id="CHEBI:18420"/>
    </cofactor>
    <text evidence="1">Binds 1 Mg(2+) ion per subunit.</text>
</comment>
<comment type="pathway">
    <text evidence="1">Cofactor biosynthesis; (R)-pantothenate biosynthesis; (R)-pantoate from 3-methyl-2-oxobutanoate: step 1/2.</text>
</comment>
<comment type="subunit">
    <text evidence="1">Homodecamer; pentamer of dimers.</text>
</comment>
<comment type="subcellular location">
    <subcellularLocation>
        <location evidence="1">Cytoplasm</location>
    </subcellularLocation>
</comment>
<comment type="similarity">
    <text evidence="1">Belongs to the PanB family.</text>
</comment>
<keyword id="KW-0963">Cytoplasm</keyword>
<keyword id="KW-0460">Magnesium</keyword>
<keyword id="KW-0479">Metal-binding</keyword>
<keyword id="KW-0566">Pantothenate biosynthesis</keyword>
<keyword id="KW-0808">Transferase</keyword>